<comment type="function">
    <text evidence="1">Involved in the final reduction of the elongation cycle of fatty acid synthesis (FAS II). Catalyzes the reduction of a carbon-carbon double bond in an enoyl moiety that is covalently linked to an acyl carrier protein (ACP).</text>
</comment>
<comment type="catalytic activity">
    <reaction evidence="1">
        <text>a 2,3-saturated acyl-[ACP] + NAD(+) = a (2E)-enoyl-[ACP] + NADH + H(+)</text>
        <dbReference type="Rhea" id="RHEA:10240"/>
        <dbReference type="Rhea" id="RHEA-COMP:9925"/>
        <dbReference type="Rhea" id="RHEA-COMP:9926"/>
        <dbReference type="ChEBI" id="CHEBI:15378"/>
        <dbReference type="ChEBI" id="CHEBI:57540"/>
        <dbReference type="ChEBI" id="CHEBI:57945"/>
        <dbReference type="ChEBI" id="CHEBI:78784"/>
        <dbReference type="ChEBI" id="CHEBI:78785"/>
        <dbReference type="EC" id="1.3.1.9"/>
    </reaction>
</comment>
<comment type="pathway">
    <text evidence="1">Lipid metabolism; fatty acid biosynthesis.</text>
</comment>
<comment type="subunit">
    <text evidence="1">Monomer.</text>
</comment>
<comment type="similarity">
    <text evidence="1">Belongs to the TER reductase family.</text>
</comment>
<organism>
    <name type="scientific">Paraburkholderia phytofirmans (strain DSM 17436 / LMG 22146 / PsJN)</name>
    <name type="common">Burkholderia phytofirmans</name>
    <dbReference type="NCBI Taxonomy" id="398527"/>
    <lineage>
        <taxon>Bacteria</taxon>
        <taxon>Pseudomonadati</taxon>
        <taxon>Pseudomonadota</taxon>
        <taxon>Betaproteobacteria</taxon>
        <taxon>Burkholderiales</taxon>
        <taxon>Burkholderiaceae</taxon>
        <taxon>Paraburkholderia</taxon>
    </lineage>
</organism>
<keyword id="KW-0275">Fatty acid biosynthesis</keyword>
<keyword id="KW-0276">Fatty acid metabolism</keyword>
<keyword id="KW-0444">Lipid biosynthesis</keyword>
<keyword id="KW-0443">Lipid metabolism</keyword>
<keyword id="KW-0520">NAD</keyword>
<keyword id="KW-0560">Oxidoreductase</keyword>
<proteinExistence type="inferred from homology"/>
<protein>
    <recommendedName>
        <fullName evidence="1">Enoyl-[acyl-carrier-protein] reductase [NADH]</fullName>
        <shortName evidence="1">ENR</shortName>
        <ecNumber evidence="1">1.3.1.9</ecNumber>
    </recommendedName>
</protein>
<dbReference type="EC" id="1.3.1.9" evidence="1"/>
<dbReference type="EMBL" id="CP001052">
    <property type="protein sequence ID" value="ACD16419.1"/>
    <property type="molecule type" value="Genomic_DNA"/>
</dbReference>
<dbReference type="RefSeq" id="WP_012433018.1">
    <property type="nucleotide sequence ID" value="NC_010681.1"/>
</dbReference>
<dbReference type="SMR" id="B2T4A8"/>
<dbReference type="STRING" id="398527.Bphyt_2012"/>
<dbReference type="KEGG" id="bpy:Bphyt_2012"/>
<dbReference type="eggNOG" id="COG3007">
    <property type="taxonomic scope" value="Bacteria"/>
</dbReference>
<dbReference type="HOGENOM" id="CLU_057698_1_0_4"/>
<dbReference type="OrthoDB" id="9802260at2"/>
<dbReference type="UniPathway" id="UPA00094"/>
<dbReference type="Proteomes" id="UP000001739">
    <property type="component" value="Chromosome 1"/>
</dbReference>
<dbReference type="GO" id="GO:0004318">
    <property type="term" value="F:enoyl-[acyl-carrier-protein] reductase (NADH) activity"/>
    <property type="evidence" value="ECO:0007669"/>
    <property type="project" value="UniProtKB-UniRule"/>
</dbReference>
<dbReference type="GO" id="GO:0051287">
    <property type="term" value="F:NAD binding"/>
    <property type="evidence" value="ECO:0007669"/>
    <property type="project" value="UniProtKB-UniRule"/>
</dbReference>
<dbReference type="GO" id="GO:0050343">
    <property type="term" value="F:trans-2-enoyl-CoA reductase (NADH) activity"/>
    <property type="evidence" value="ECO:0007669"/>
    <property type="project" value="TreeGrafter"/>
</dbReference>
<dbReference type="GO" id="GO:0006633">
    <property type="term" value="P:fatty acid biosynthetic process"/>
    <property type="evidence" value="ECO:0007669"/>
    <property type="project" value="UniProtKB-UniRule"/>
</dbReference>
<dbReference type="FunFam" id="3.40.50.720:FF:000221">
    <property type="entry name" value="Enoyl-[acyl-carrier-protein] reductase [NADH]"/>
    <property type="match status" value="1"/>
</dbReference>
<dbReference type="Gene3D" id="3.40.50.720">
    <property type="entry name" value="NAD(P)-binding Rossmann-like Domain"/>
    <property type="match status" value="1"/>
</dbReference>
<dbReference type="HAMAP" id="MF_01838">
    <property type="entry name" value="FabV_reductase"/>
    <property type="match status" value="1"/>
</dbReference>
<dbReference type="InterPro" id="IPR024906">
    <property type="entry name" value="Eno_Rdtase_FAD-bd_dom"/>
</dbReference>
<dbReference type="InterPro" id="IPR024910">
    <property type="entry name" value="Enoyl-CoA_Rdtase_cat_dom"/>
</dbReference>
<dbReference type="InterPro" id="IPR050048">
    <property type="entry name" value="FabV-like_NADH_b"/>
</dbReference>
<dbReference type="InterPro" id="IPR010758">
    <property type="entry name" value="Trans-2-enoyl-CoA_reductase"/>
</dbReference>
<dbReference type="NCBIfam" id="NF043048">
    <property type="entry name" value="EnoyACPredFabV"/>
    <property type="match status" value="1"/>
</dbReference>
<dbReference type="NCBIfam" id="NF010177">
    <property type="entry name" value="PRK13656.1"/>
    <property type="match status" value="1"/>
</dbReference>
<dbReference type="PANTHER" id="PTHR37480">
    <property type="entry name" value="ENOYL-[ACYL-CARRIER-PROTEIN] REDUCTASE [NADH]"/>
    <property type="match status" value="1"/>
</dbReference>
<dbReference type="PANTHER" id="PTHR37480:SF1">
    <property type="entry name" value="ENOYL-[ACYL-CARRIER-PROTEIN] REDUCTASE [NADH]"/>
    <property type="match status" value="1"/>
</dbReference>
<dbReference type="Pfam" id="PF07055">
    <property type="entry name" value="Eno-Rase_FAD_bd"/>
    <property type="match status" value="1"/>
</dbReference>
<dbReference type="Pfam" id="PF12242">
    <property type="entry name" value="Eno-Rase_NADH_b"/>
    <property type="match status" value="1"/>
</dbReference>
<dbReference type="Pfam" id="PF12241">
    <property type="entry name" value="Enoyl_reductase"/>
    <property type="match status" value="1"/>
</dbReference>
<sequence>MIIKPRVRGFICVSTHPTGCEANVREQIDYVKARGPIANGPKKVLVIGASTGYGLAARISAAFGSDAATLGVFFERAGSETKAGTAGWYNTAAFEKFATEKGLYATSINGDAFSDEVKARTIEVIKRDLGQVDLVVYSLAAPKRTHPKSGEVFSSTLKPVGKAVNLRGIDTDKEVIKETVLEPATQKEIDDTVAVMGGEDWQMWIDALLEAGVLADGAKTTAFTYLGEKITHDIYWNGSIGAAKKDLDQKVLGIREKLAAKGGDARVSVLKAVVTQASSAIPMMPLYLSLLFKVMKEKGTHEGCIEQVYGLYKDSLYGAAPHIDEEGRLRADYKELDPEVQNRVQELWTQVTNDNIYELTDFSGYKTDFLRLFGFEIAGVDYEADVNPDVQIPKLVQV</sequence>
<accession>B2T4A8</accession>
<feature type="chain" id="PRO_1000188360" description="Enoyl-[acyl-carrier-protein] reductase [NADH]">
    <location>
        <begin position="1"/>
        <end position="398"/>
    </location>
</feature>
<feature type="active site" description="Proton donor" evidence="1">
    <location>
        <position position="235"/>
    </location>
</feature>
<feature type="binding site" evidence="1">
    <location>
        <begin position="48"/>
        <end position="53"/>
    </location>
    <ligand>
        <name>NAD(+)</name>
        <dbReference type="ChEBI" id="CHEBI:57540"/>
    </ligand>
</feature>
<feature type="binding site" evidence="1">
    <location>
        <begin position="74"/>
        <end position="75"/>
    </location>
    <ligand>
        <name>NAD(+)</name>
        <dbReference type="ChEBI" id="CHEBI:57540"/>
    </ligand>
</feature>
<feature type="binding site" evidence="1">
    <location>
        <begin position="111"/>
        <end position="112"/>
    </location>
    <ligand>
        <name>NAD(+)</name>
        <dbReference type="ChEBI" id="CHEBI:57540"/>
    </ligand>
</feature>
<feature type="binding site" evidence="1">
    <location>
        <begin position="139"/>
        <end position="140"/>
    </location>
    <ligand>
        <name>NAD(+)</name>
        <dbReference type="ChEBI" id="CHEBI:57540"/>
    </ligand>
</feature>
<feature type="binding site" evidence="1">
    <location>
        <position position="225"/>
    </location>
    <ligand>
        <name>substrate</name>
    </ligand>
</feature>
<feature type="binding site" evidence="1">
    <location>
        <position position="244"/>
    </location>
    <ligand>
        <name>NAD(+)</name>
        <dbReference type="ChEBI" id="CHEBI:57540"/>
    </ligand>
</feature>
<feature type="binding site" evidence="1">
    <location>
        <begin position="273"/>
        <end position="275"/>
    </location>
    <ligand>
        <name>NAD(+)</name>
        <dbReference type="ChEBI" id="CHEBI:57540"/>
    </ligand>
</feature>
<feature type="site" description="Plays an important role in discriminating NADH against NADPH" evidence="1">
    <location>
        <position position="75"/>
    </location>
</feature>
<evidence type="ECO:0000255" key="1">
    <source>
        <dbReference type="HAMAP-Rule" id="MF_01838"/>
    </source>
</evidence>
<gene>
    <name evidence="1" type="primary">fabV</name>
    <name type="ordered locus">Bphyt_2012</name>
</gene>
<name>FABV_PARPJ</name>
<reference key="1">
    <citation type="journal article" date="2011" name="J. Bacteriol.">
        <title>Complete genome sequence of the plant growth-promoting endophyte Burkholderia phytofirmans strain PsJN.</title>
        <authorList>
            <person name="Weilharter A."/>
            <person name="Mitter B."/>
            <person name="Shin M.V."/>
            <person name="Chain P.S."/>
            <person name="Nowak J."/>
            <person name="Sessitsch A."/>
        </authorList>
    </citation>
    <scope>NUCLEOTIDE SEQUENCE [LARGE SCALE GENOMIC DNA]</scope>
    <source>
        <strain>DSM 17436 / LMG 22146 / PsJN</strain>
    </source>
</reference>